<feature type="chain" id="PRO_0000049742" description="Uncharacterized protein YqaK">
    <location>
        <begin position="1"/>
        <end position="284"/>
    </location>
</feature>
<feature type="region of interest" description="Disordered" evidence="1">
    <location>
        <begin position="236"/>
        <end position="284"/>
    </location>
</feature>
<feature type="compositionally biased region" description="Basic and acidic residues" evidence="1">
    <location>
        <begin position="252"/>
        <end position="262"/>
    </location>
</feature>
<feature type="compositionally biased region" description="Basic and acidic residues" evidence="1">
    <location>
        <begin position="269"/>
        <end position="284"/>
    </location>
</feature>
<protein>
    <recommendedName>
        <fullName>Uncharacterized protein YqaK</fullName>
    </recommendedName>
</protein>
<reference key="1">
    <citation type="journal article" date="1995" name="Microbiology">
        <title>Complete nucleotide sequence of a skin element excised by DNA rearrangement during sporulation in Bacillus subtilis.</title>
        <authorList>
            <person name="Takemaru K."/>
            <person name="Mizuno M."/>
            <person name="Sato T."/>
            <person name="Takeuchi M."/>
            <person name="Kobayashi Y."/>
        </authorList>
    </citation>
    <scope>NUCLEOTIDE SEQUENCE [GENOMIC DNA]</scope>
    <source>
        <strain>168 / JH642</strain>
    </source>
</reference>
<reference key="2">
    <citation type="journal article" date="1996" name="Microbiology">
        <title>Systematic sequencing of the 283 kb 210 degrees-232 degrees region of the Bacillus subtilis genome containing the skin element and many sporulation genes.</title>
        <authorList>
            <person name="Mizuno M."/>
            <person name="Masuda S."/>
            <person name="Takemaru K."/>
            <person name="Hosono S."/>
            <person name="Sato T."/>
            <person name="Takeuchi M."/>
            <person name="Kobayashi Y."/>
        </authorList>
    </citation>
    <scope>NUCLEOTIDE SEQUENCE [GENOMIC DNA]</scope>
    <source>
        <strain>168 / JH642</strain>
    </source>
</reference>
<reference key="3">
    <citation type="journal article" date="1997" name="Nature">
        <title>The complete genome sequence of the Gram-positive bacterium Bacillus subtilis.</title>
        <authorList>
            <person name="Kunst F."/>
            <person name="Ogasawara N."/>
            <person name="Moszer I."/>
            <person name="Albertini A.M."/>
            <person name="Alloni G."/>
            <person name="Azevedo V."/>
            <person name="Bertero M.G."/>
            <person name="Bessieres P."/>
            <person name="Bolotin A."/>
            <person name="Borchert S."/>
            <person name="Borriss R."/>
            <person name="Boursier L."/>
            <person name="Brans A."/>
            <person name="Braun M."/>
            <person name="Brignell S.C."/>
            <person name="Bron S."/>
            <person name="Brouillet S."/>
            <person name="Bruschi C.V."/>
            <person name="Caldwell B."/>
            <person name="Capuano V."/>
            <person name="Carter N.M."/>
            <person name="Choi S.-K."/>
            <person name="Codani J.-J."/>
            <person name="Connerton I.F."/>
            <person name="Cummings N.J."/>
            <person name="Daniel R.A."/>
            <person name="Denizot F."/>
            <person name="Devine K.M."/>
            <person name="Duesterhoeft A."/>
            <person name="Ehrlich S.D."/>
            <person name="Emmerson P.T."/>
            <person name="Entian K.-D."/>
            <person name="Errington J."/>
            <person name="Fabret C."/>
            <person name="Ferrari E."/>
            <person name="Foulger D."/>
            <person name="Fritz C."/>
            <person name="Fujita M."/>
            <person name="Fujita Y."/>
            <person name="Fuma S."/>
            <person name="Galizzi A."/>
            <person name="Galleron N."/>
            <person name="Ghim S.-Y."/>
            <person name="Glaser P."/>
            <person name="Goffeau A."/>
            <person name="Golightly E.J."/>
            <person name="Grandi G."/>
            <person name="Guiseppi G."/>
            <person name="Guy B.J."/>
            <person name="Haga K."/>
            <person name="Haiech J."/>
            <person name="Harwood C.R."/>
            <person name="Henaut A."/>
            <person name="Hilbert H."/>
            <person name="Holsappel S."/>
            <person name="Hosono S."/>
            <person name="Hullo M.-F."/>
            <person name="Itaya M."/>
            <person name="Jones L.-M."/>
            <person name="Joris B."/>
            <person name="Karamata D."/>
            <person name="Kasahara Y."/>
            <person name="Klaerr-Blanchard M."/>
            <person name="Klein C."/>
            <person name="Kobayashi Y."/>
            <person name="Koetter P."/>
            <person name="Koningstein G."/>
            <person name="Krogh S."/>
            <person name="Kumano M."/>
            <person name="Kurita K."/>
            <person name="Lapidus A."/>
            <person name="Lardinois S."/>
            <person name="Lauber J."/>
            <person name="Lazarevic V."/>
            <person name="Lee S.-M."/>
            <person name="Levine A."/>
            <person name="Liu H."/>
            <person name="Masuda S."/>
            <person name="Mauel C."/>
            <person name="Medigue C."/>
            <person name="Medina N."/>
            <person name="Mellado R.P."/>
            <person name="Mizuno M."/>
            <person name="Moestl D."/>
            <person name="Nakai S."/>
            <person name="Noback M."/>
            <person name="Noone D."/>
            <person name="O'Reilly M."/>
            <person name="Ogawa K."/>
            <person name="Ogiwara A."/>
            <person name="Oudega B."/>
            <person name="Park S.-H."/>
            <person name="Parro V."/>
            <person name="Pohl T.M."/>
            <person name="Portetelle D."/>
            <person name="Porwollik S."/>
            <person name="Prescott A.M."/>
            <person name="Presecan E."/>
            <person name="Pujic P."/>
            <person name="Purnelle B."/>
            <person name="Rapoport G."/>
            <person name="Rey M."/>
            <person name="Reynolds S."/>
            <person name="Rieger M."/>
            <person name="Rivolta C."/>
            <person name="Rocha E."/>
            <person name="Roche B."/>
            <person name="Rose M."/>
            <person name="Sadaie Y."/>
            <person name="Sato T."/>
            <person name="Scanlan E."/>
            <person name="Schleich S."/>
            <person name="Schroeter R."/>
            <person name="Scoffone F."/>
            <person name="Sekiguchi J."/>
            <person name="Sekowska A."/>
            <person name="Seror S.J."/>
            <person name="Serror P."/>
            <person name="Shin B.-S."/>
            <person name="Soldo B."/>
            <person name="Sorokin A."/>
            <person name="Tacconi E."/>
            <person name="Takagi T."/>
            <person name="Takahashi H."/>
            <person name="Takemaru K."/>
            <person name="Takeuchi M."/>
            <person name="Tamakoshi A."/>
            <person name="Tanaka T."/>
            <person name="Terpstra P."/>
            <person name="Tognoni A."/>
            <person name="Tosato V."/>
            <person name="Uchiyama S."/>
            <person name="Vandenbol M."/>
            <person name="Vannier F."/>
            <person name="Vassarotti A."/>
            <person name="Viari A."/>
            <person name="Wambutt R."/>
            <person name="Wedler E."/>
            <person name="Wedler H."/>
            <person name="Weitzenegger T."/>
            <person name="Winters P."/>
            <person name="Wipat A."/>
            <person name="Yamamoto H."/>
            <person name="Yamane K."/>
            <person name="Yasumoto K."/>
            <person name="Yata K."/>
            <person name="Yoshida K."/>
            <person name="Yoshikawa H.-F."/>
            <person name="Zumstein E."/>
            <person name="Yoshikawa H."/>
            <person name="Danchin A."/>
        </authorList>
    </citation>
    <scope>NUCLEOTIDE SEQUENCE [LARGE SCALE GENOMIC DNA]</scope>
    <source>
        <strain>168</strain>
    </source>
</reference>
<reference key="4">
    <citation type="journal article" date="1995" name="Gene">
        <title>Analysis of a Bacillus subtilis genome fragment using a co-operative computer system prototype.</title>
        <authorList>
            <person name="Medigue C."/>
            <person name="Moszer I."/>
            <person name="Viari A."/>
            <person name="Danchin A."/>
        </authorList>
    </citation>
    <scope>IDENTIFICATION</scope>
</reference>
<accession>P45908</accession>
<organism>
    <name type="scientific">Bacillus subtilis (strain 168)</name>
    <dbReference type="NCBI Taxonomy" id="224308"/>
    <lineage>
        <taxon>Bacteria</taxon>
        <taxon>Bacillati</taxon>
        <taxon>Bacillota</taxon>
        <taxon>Bacilli</taxon>
        <taxon>Bacillales</taxon>
        <taxon>Bacillaceae</taxon>
        <taxon>Bacillus</taxon>
    </lineage>
</organism>
<gene>
    <name type="primary">yqaK</name>
    <name type="ordered locus">BSU26280</name>
</gene>
<evidence type="ECO:0000256" key="1">
    <source>
        <dbReference type="SAM" id="MobiDB-lite"/>
    </source>
</evidence>
<name>YQAK_BACSU</name>
<keyword id="KW-1185">Reference proteome</keyword>
<proteinExistence type="predicted"/>
<sequence>MATNQSIKNNIQKKQKNVPVQQQGATMKGLLSSPSVIKRFEEVLGKRATQFTASILSLYNSEQMLQKTDPMSVISSAMVAATLDLPIDKNLGYAWIVPYGGKAQFQLGYKGYIQLALRTGQYKSINCIPIHEGELQKWNPLTEEIEIDFEKRESDAVIGYAAYFELINGFRKTVYWTKAQVEKHKKKFSKSDFGWKNDWDAMALKTVLKAVLSKWGILSVEMQKAVIEEDETRERIDITNEADSSEIIDSEPSNKDETEKPSAQETDPFDGKPVDIKDDELPFD</sequence>
<dbReference type="EMBL" id="D32216">
    <property type="protein sequence ID" value="BAA06925.1"/>
    <property type="molecule type" value="Genomic_DNA"/>
</dbReference>
<dbReference type="EMBL" id="D84432">
    <property type="protein sequence ID" value="BAA12386.1"/>
    <property type="molecule type" value="Genomic_DNA"/>
</dbReference>
<dbReference type="EMBL" id="AL009126">
    <property type="protein sequence ID" value="CAB14569.1"/>
    <property type="molecule type" value="Genomic_DNA"/>
</dbReference>
<dbReference type="PIR" id="B69945">
    <property type="entry name" value="B69945"/>
</dbReference>
<dbReference type="RefSeq" id="NP_390505.1">
    <property type="nucleotide sequence ID" value="NC_000964.3"/>
</dbReference>
<dbReference type="RefSeq" id="WP_003229907.1">
    <property type="nucleotide sequence ID" value="NZ_OZ025638.1"/>
</dbReference>
<dbReference type="SMR" id="P45908"/>
<dbReference type="FunCoup" id="P45908">
    <property type="interactions" value="116"/>
</dbReference>
<dbReference type="STRING" id="224308.BSU26280"/>
<dbReference type="PaxDb" id="224308-BSU26280"/>
<dbReference type="EnsemblBacteria" id="CAB14569">
    <property type="protein sequence ID" value="CAB14569"/>
    <property type="gene ID" value="BSU_26280"/>
</dbReference>
<dbReference type="GeneID" id="937691"/>
<dbReference type="KEGG" id="bsu:BSU26280"/>
<dbReference type="PATRIC" id="fig|224308.179.peg.2856"/>
<dbReference type="eggNOG" id="COG3723">
    <property type="taxonomic scope" value="Bacteria"/>
</dbReference>
<dbReference type="InParanoid" id="P45908"/>
<dbReference type="OrthoDB" id="1045432at2"/>
<dbReference type="BioCyc" id="BSUB:BSU26280-MONOMER"/>
<dbReference type="Proteomes" id="UP000001570">
    <property type="component" value="Chromosome"/>
</dbReference>
<dbReference type="GO" id="GO:0003677">
    <property type="term" value="F:DNA binding"/>
    <property type="evidence" value="ECO:0007669"/>
    <property type="project" value="InterPro"/>
</dbReference>
<dbReference type="GO" id="GO:0006259">
    <property type="term" value="P:DNA metabolic process"/>
    <property type="evidence" value="ECO:0007669"/>
    <property type="project" value="InterPro"/>
</dbReference>
<dbReference type="InterPro" id="IPR018330">
    <property type="entry name" value="RecT_fam"/>
</dbReference>
<dbReference type="InterPro" id="IPR004590">
    <property type="entry name" value="ssDNA_annealing_RecT"/>
</dbReference>
<dbReference type="NCBIfam" id="TIGR00616">
    <property type="entry name" value="rect"/>
    <property type="match status" value="1"/>
</dbReference>
<dbReference type="Pfam" id="PF03837">
    <property type="entry name" value="RecT"/>
    <property type="match status" value="1"/>
</dbReference>